<gene>
    <name evidence="1" type="primary">bioB</name>
    <name type="ordered locus">CENSYa_0981</name>
</gene>
<evidence type="ECO:0000255" key="1">
    <source>
        <dbReference type="HAMAP-Rule" id="MF_01694"/>
    </source>
</evidence>
<evidence type="ECO:0000255" key="2">
    <source>
        <dbReference type="PROSITE-ProRule" id="PRU01266"/>
    </source>
</evidence>
<sequence length="318" mass="34615">MGIAECRDKVLGGGELTKDEARGLMEADVTELAAAADEITRRFNGDGVDVEQLNNIKRDGCSEDCTFCGQSAFYDADKEPHPLPEPEEVVRAALKAKKEEASSYCLVAAWREPTPEGFEKVCTIIQEINTHVGISVECSLGFLTRERAARLKGLGVKRYNHNLETARSKFPEICSTHTYEDRLDTLEIAREAGLELCTGGIIGMGESRGQRIELAMELARIRPEEATVNILVPVQGTPMELQAPLPPGEAERFFALVRFLLPRSVVKISGGREKALDDDGRAILRGGANGIITSGYLTMGGNDSSADMEMIREAGLEA</sequence>
<reference key="1">
    <citation type="journal article" date="2006" name="Proc. Natl. Acad. Sci. U.S.A.">
        <title>Genomic analysis of the uncultivated marine crenarchaeote Cenarchaeum symbiosum.</title>
        <authorList>
            <person name="Hallam S.J."/>
            <person name="Konstantinidis K.T."/>
            <person name="Putnam N."/>
            <person name="Schleper C."/>
            <person name="Watanabe Y."/>
            <person name="Sugahara J."/>
            <person name="Preston C."/>
            <person name="de la Torre J."/>
            <person name="Richardson P.M."/>
            <person name="DeLong E.F."/>
        </authorList>
    </citation>
    <scope>NUCLEOTIDE SEQUENCE [LARGE SCALE GENOMIC DNA]</scope>
    <source>
        <strain>A</strain>
    </source>
</reference>
<name>BIOB_CENSY</name>
<comment type="function">
    <text evidence="1">Catalyzes the conversion of dethiobiotin (DTB) to biotin by the insertion of a sulfur atom into dethiobiotin via a radical-based mechanism.</text>
</comment>
<comment type="catalytic activity">
    <reaction evidence="1">
        <text>(4R,5S)-dethiobiotin + (sulfur carrier)-SH + 2 reduced [2Fe-2S]-[ferredoxin] + 2 S-adenosyl-L-methionine = (sulfur carrier)-H + biotin + 2 5'-deoxyadenosine + 2 L-methionine + 2 oxidized [2Fe-2S]-[ferredoxin]</text>
        <dbReference type="Rhea" id="RHEA:22060"/>
        <dbReference type="Rhea" id="RHEA-COMP:10000"/>
        <dbReference type="Rhea" id="RHEA-COMP:10001"/>
        <dbReference type="Rhea" id="RHEA-COMP:14737"/>
        <dbReference type="Rhea" id="RHEA-COMP:14739"/>
        <dbReference type="ChEBI" id="CHEBI:17319"/>
        <dbReference type="ChEBI" id="CHEBI:29917"/>
        <dbReference type="ChEBI" id="CHEBI:33737"/>
        <dbReference type="ChEBI" id="CHEBI:33738"/>
        <dbReference type="ChEBI" id="CHEBI:57586"/>
        <dbReference type="ChEBI" id="CHEBI:57844"/>
        <dbReference type="ChEBI" id="CHEBI:59789"/>
        <dbReference type="ChEBI" id="CHEBI:64428"/>
        <dbReference type="ChEBI" id="CHEBI:149473"/>
        <dbReference type="EC" id="2.8.1.6"/>
    </reaction>
</comment>
<comment type="cofactor">
    <cofactor evidence="1">
        <name>[4Fe-4S] cluster</name>
        <dbReference type="ChEBI" id="CHEBI:49883"/>
    </cofactor>
    <text evidence="1">Binds 1 [4Fe-4S] cluster. The cluster is coordinated with 3 cysteines and an exchangeable S-adenosyl-L-methionine.</text>
</comment>
<comment type="cofactor">
    <cofactor evidence="1">
        <name>[2Fe-2S] cluster</name>
        <dbReference type="ChEBI" id="CHEBI:190135"/>
    </cofactor>
    <text evidence="1">Binds 1 [2Fe-2S] cluster. The cluster is coordinated with 3 cysteines and 1 arginine.</text>
</comment>
<comment type="pathway">
    <text evidence="1">Cofactor biosynthesis; biotin biosynthesis; biotin from 7,8-diaminononanoate: step 2/2.</text>
</comment>
<comment type="subunit">
    <text evidence="1">Homodimer.</text>
</comment>
<comment type="similarity">
    <text evidence="1">Belongs to the radical SAM superfamily. Biotin synthase family.</text>
</comment>
<keyword id="KW-0001">2Fe-2S</keyword>
<keyword id="KW-0004">4Fe-4S</keyword>
<keyword id="KW-0093">Biotin biosynthesis</keyword>
<keyword id="KW-0408">Iron</keyword>
<keyword id="KW-0411">Iron-sulfur</keyword>
<keyword id="KW-0479">Metal-binding</keyword>
<keyword id="KW-1185">Reference proteome</keyword>
<keyword id="KW-0949">S-adenosyl-L-methionine</keyword>
<keyword id="KW-0808">Transferase</keyword>
<organism>
    <name type="scientific">Cenarchaeum symbiosum (strain A)</name>
    <dbReference type="NCBI Taxonomy" id="414004"/>
    <lineage>
        <taxon>Archaea</taxon>
        <taxon>Nitrososphaerota</taxon>
        <taxon>Candidatus Cenarchaeales</taxon>
        <taxon>Candidatus Cenarchaeaceae</taxon>
        <taxon>Candidatus Cenarchaeum</taxon>
    </lineage>
</organism>
<accession>A0RW96</accession>
<dbReference type="EC" id="2.8.1.6" evidence="1"/>
<dbReference type="EMBL" id="DP000238">
    <property type="protein sequence ID" value="ABK77613.1"/>
    <property type="molecule type" value="Genomic_DNA"/>
</dbReference>
<dbReference type="SMR" id="A0RW96"/>
<dbReference type="STRING" id="414004.CENSYa_0981"/>
<dbReference type="EnsemblBacteria" id="ABK77613">
    <property type="protein sequence ID" value="ABK77613"/>
    <property type="gene ID" value="CENSYa_0981"/>
</dbReference>
<dbReference type="KEGG" id="csy:CENSYa_0981"/>
<dbReference type="PATRIC" id="fig|414004.10.peg.905"/>
<dbReference type="HOGENOM" id="CLU_033172_2_1_2"/>
<dbReference type="UniPathway" id="UPA00078">
    <property type="reaction ID" value="UER00162"/>
</dbReference>
<dbReference type="Proteomes" id="UP000000758">
    <property type="component" value="Chromosome"/>
</dbReference>
<dbReference type="GO" id="GO:0051537">
    <property type="term" value="F:2 iron, 2 sulfur cluster binding"/>
    <property type="evidence" value="ECO:0007669"/>
    <property type="project" value="UniProtKB-KW"/>
</dbReference>
<dbReference type="GO" id="GO:0051539">
    <property type="term" value="F:4 iron, 4 sulfur cluster binding"/>
    <property type="evidence" value="ECO:0007669"/>
    <property type="project" value="UniProtKB-KW"/>
</dbReference>
<dbReference type="GO" id="GO:0004076">
    <property type="term" value="F:biotin synthase activity"/>
    <property type="evidence" value="ECO:0007669"/>
    <property type="project" value="UniProtKB-UniRule"/>
</dbReference>
<dbReference type="GO" id="GO:0005506">
    <property type="term" value="F:iron ion binding"/>
    <property type="evidence" value="ECO:0007669"/>
    <property type="project" value="UniProtKB-UniRule"/>
</dbReference>
<dbReference type="GO" id="GO:0009102">
    <property type="term" value="P:biotin biosynthetic process"/>
    <property type="evidence" value="ECO:0007669"/>
    <property type="project" value="UniProtKB-UniRule"/>
</dbReference>
<dbReference type="CDD" id="cd01335">
    <property type="entry name" value="Radical_SAM"/>
    <property type="match status" value="1"/>
</dbReference>
<dbReference type="Gene3D" id="3.20.20.70">
    <property type="entry name" value="Aldolase class I"/>
    <property type="match status" value="1"/>
</dbReference>
<dbReference type="HAMAP" id="MF_01694">
    <property type="entry name" value="BioB"/>
    <property type="match status" value="1"/>
</dbReference>
<dbReference type="InterPro" id="IPR013785">
    <property type="entry name" value="Aldolase_TIM"/>
</dbReference>
<dbReference type="InterPro" id="IPR010722">
    <property type="entry name" value="BATS_dom"/>
</dbReference>
<dbReference type="InterPro" id="IPR002684">
    <property type="entry name" value="Biotin_synth/BioAB"/>
</dbReference>
<dbReference type="InterPro" id="IPR024177">
    <property type="entry name" value="Biotin_synthase"/>
</dbReference>
<dbReference type="InterPro" id="IPR006638">
    <property type="entry name" value="Elp3/MiaA/NifB-like_rSAM"/>
</dbReference>
<dbReference type="InterPro" id="IPR007197">
    <property type="entry name" value="rSAM"/>
</dbReference>
<dbReference type="NCBIfam" id="TIGR00433">
    <property type="entry name" value="bioB"/>
    <property type="match status" value="1"/>
</dbReference>
<dbReference type="PANTHER" id="PTHR22976">
    <property type="entry name" value="BIOTIN SYNTHASE"/>
    <property type="match status" value="1"/>
</dbReference>
<dbReference type="PANTHER" id="PTHR22976:SF2">
    <property type="entry name" value="BIOTIN SYNTHASE, MITOCHONDRIAL"/>
    <property type="match status" value="1"/>
</dbReference>
<dbReference type="Pfam" id="PF06968">
    <property type="entry name" value="BATS"/>
    <property type="match status" value="1"/>
</dbReference>
<dbReference type="Pfam" id="PF04055">
    <property type="entry name" value="Radical_SAM"/>
    <property type="match status" value="1"/>
</dbReference>
<dbReference type="PIRSF" id="PIRSF001619">
    <property type="entry name" value="Biotin_synth"/>
    <property type="match status" value="1"/>
</dbReference>
<dbReference type="SFLD" id="SFLDG01060">
    <property type="entry name" value="BATS_domain_containing"/>
    <property type="match status" value="1"/>
</dbReference>
<dbReference type="SFLD" id="SFLDG01278">
    <property type="entry name" value="biotin_synthase_like"/>
    <property type="match status" value="1"/>
</dbReference>
<dbReference type="SMART" id="SM00876">
    <property type="entry name" value="BATS"/>
    <property type="match status" value="1"/>
</dbReference>
<dbReference type="SMART" id="SM00729">
    <property type="entry name" value="Elp3"/>
    <property type="match status" value="1"/>
</dbReference>
<dbReference type="SUPFAM" id="SSF102114">
    <property type="entry name" value="Radical SAM enzymes"/>
    <property type="match status" value="1"/>
</dbReference>
<dbReference type="PROSITE" id="PS51918">
    <property type="entry name" value="RADICAL_SAM"/>
    <property type="match status" value="1"/>
</dbReference>
<protein>
    <recommendedName>
        <fullName evidence="1">Biotin synthase</fullName>
        <ecNumber evidence="1">2.8.1.6</ecNumber>
    </recommendedName>
</protein>
<feature type="chain" id="PRO_0000381295" description="Biotin synthase">
    <location>
        <begin position="1"/>
        <end position="318"/>
    </location>
</feature>
<feature type="domain" description="Radical SAM core" evidence="2">
    <location>
        <begin position="46"/>
        <end position="272"/>
    </location>
</feature>
<feature type="binding site" evidence="1">
    <location>
        <position position="61"/>
    </location>
    <ligand>
        <name>[4Fe-4S] cluster</name>
        <dbReference type="ChEBI" id="CHEBI:49883"/>
        <note>4Fe-4S-S-AdoMet</note>
    </ligand>
</feature>
<feature type="binding site" evidence="1">
    <location>
        <position position="65"/>
    </location>
    <ligand>
        <name>[4Fe-4S] cluster</name>
        <dbReference type="ChEBI" id="CHEBI:49883"/>
        <note>4Fe-4S-S-AdoMet</note>
    </ligand>
</feature>
<feature type="binding site" evidence="1">
    <location>
        <position position="68"/>
    </location>
    <ligand>
        <name>[4Fe-4S] cluster</name>
        <dbReference type="ChEBI" id="CHEBI:49883"/>
        <note>4Fe-4S-S-AdoMet</note>
    </ligand>
</feature>
<feature type="binding site" evidence="1">
    <location>
        <position position="105"/>
    </location>
    <ligand>
        <name>[2Fe-2S] cluster</name>
        <dbReference type="ChEBI" id="CHEBI:190135"/>
    </ligand>
</feature>
<feature type="binding site" evidence="1">
    <location>
        <position position="138"/>
    </location>
    <ligand>
        <name>[2Fe-2S] cluster</name>
        <dbReference type="ChEBI" id="CHEBI:190135"/>
    </ligand>
</feature>
<feature type="binding site" evidence="1">
    <location>
        <position position="197"/>
    </location>
    <ligand>
        <name>[2Fe-2S] cluster</name>
        <dbReference type="ChEBI" id="CHEBI:190135"/>
    </ligand>
</feature>
<feature type="binding site" evidence="1">
    <location>
        <position position="267"/>
    </location>
    <ligand>
        <name>[2Fe-2S] cluster</name>
        <dbReference type="ChEBI" id="CHEBI:190135"/>
    </ligand>
</feature>
<proteinExistence type="inferred from homology"/>